<protein>
    <recommendedName>
        <fullName evidence="1">Glycogen synthase</fullName>
        <ecNumber evidence="1">2.4.1.21</ecNumber>
    </recommendedName>
    <alternativeName>
        <fullName evidence="1">Starch [bacterial glycogen] synthase</fullName>
    </alternativeName>
</protein>
<comment type="function">
    <text evidence="1">Synthesizes alpha-1,4-glucan chains using ADP-glucose.</text>
</comment>
<comment type="catalytic activity">
    <reaction evidence="1">
        <text>[(1-&gt;4)-alpha-D-glucosyl](n) + ADP-alpha-D-glucose = [(1-&gt;4)-alpha-D-glucosyl](n+1) + ADP + H(+)</text>
        <dbReference type="Rhea" id="RHEA:18189"/>
        <dbReference type="Rhea" id="RHEA-COMP:9584"/>
        <dbReference type="Rhea" id="RHEA-COMP:9587"/>
        <dbReference type="ChEBI" id="CHEBI:15378"/>
        <dbReference type="ChEBI" id="CHEBI:15444"/>
        <dbReference type="ChEBI" id="CHEBI:57498"/>
        <dbReference type="ChEBI" id="CHEBI:456216"/>
        <dbReference type="EC" id="2.4.1.21"/>
    </reaction>
</comment>
<comment type="pathway">
    <text evidence="1">Glycan biosynthesis; glycogen biosynthesis.</text>
</comment>
<comment type="similarity">
    <text evidence="1">Belongs to the glycosyltransferase 1 family. Bacterial/plant glycogen synthase subfamily.</text>
</comment>
<comment type="sequence caution" evidence="2">
    <conflict type="erroneous initiation">
        <sequence resource="EMBL-CDS" id="AAK04797"/>
    </conflict>
</comment>
<gene>
    <name evidence="1" type="primary">glgA</name>
    <name type="ordered locus">LL0699</name>
    <name type="ORF">L98347</name>
</gene>
<reference key="1">
    <citation type="journal article" date="2001" name="Genome Res.">
        <title>The complete genome sequence of the lactic acid bacterium Lactococcus lactis ssp. lactis IL1403.</title>
        <authorList>
            <person name="Bolotin A."/>
            <person name="Wincker P."/>
            <person name="Mauger S."/>
            <person name="Jaillon O."/>
            <person name="Malarme K."/>
            <person name="Weissenbach J."/>
            <person name="Ehrlich S.D."/>
            <person name="Sorokin A."/>
        </authorList>
    </citation>
    <scope>NUCLEOTIDE SEQUENCE [LARGE SCALE GENOMIC DNA]</scope>
    <source>
        <strain>IL1403</strain>
    </source>
</reference>
<feature type="chain" id="PRO_0000188621" description="Glycogen synthase">
    <location>
        <begin position="1"/>
        <end position="478"/>
    </location>
</feature>
<feature type="binding site" evidence="1">
    <location>
        <position position="15"/>
    </location>
    <ligand>
        <name>ADP-alpha-D-glucose</name>
        <dbReference type="ChEBI" id="CHEBI:57498"/>
    </ligand>
</feature>
<dbReference type="EC" id="2.4.1.21" evidence="1"/>
<dbReference type="EMBL" id="AE005176">
    <property type="protein sequence ID" value="AAK04797.1"/>
    <property type="status" value="ALT_INIT"/>
    <property type="molecule type" value="Genomic_DNA"/>
</dbReference>
<dbReference type="PIR" id="C86712">
    <property type="entry name" value="C86712"/>
</dbReference>
<dbReference type="RefSeq" id="NP_266855.1">
    <property type="nucleotide sequence ID" value="NC_002662.1"/>
</dbReference>
<dbReference type="RefSeq" id="WP_014570454.1">
    <property type="nucleotide sequence ID" value="NC_002662.1"/>
</dbReference>
<dbReference type="SMR" id="Q9CHM9"/>
<dbReference type="CAZy" id="GT5">
    <property type="family name" value="Glycosyltransferase Family 5"/>
</dbReference>
<dbReference type="PaxDb" id="272623-L98347"/>
<dbReference type="EnsemblBacteria" id="AAK04797">
    <property type="protein sequence ID" value="AAK04797"/>
    <property type="gene ID" value="L98347"/>
</dbReference>
<dbReference type="KEGG" id="lla:L98347"/>
<dbReference type="PATRIC" id="fig|272623.7.peg.750"/>
<dbReference type="eggNOG" id="COG0297">
    <property type="taxonomic scope" value="Bacteria"/>
</dbReference>
<dbReference type="HOGENOM" id="CLU_009583_18_2_9"/>
<dbReference type="OrthoDB" id="9808590at2"/>
<dbReference type="UniPathway" id="UPA00164"/>
<dbReference type="Proteomes" id="UP000002196">
    <property type="component" value="Chromosome"/>
</dbReference>
<dbReference type="GO" id="GO:0009011">
    <property type="term" value="F:alpha-1,4-glucan glucosyltransferase (ADP-glucose donor) activity"/>
    <property type="evidence" value="ECO:0007669"/>
    <property type="project" value="UniProtKB-UniRule"/>
</dbReference>
<dbReference type="GO" id="GO:0004373">
    <property type="term" value="F:alpha-1,4-glucan glucosyltransferase (UDP-glucose donor) activity"/>
    <property type="evidence" value="ECO:0007669"/>
    <property type="project" value="InterPro"/>
</dbReference>
<dbReference type="GO" id="GO:0005978">
    <property type="term" value="P:glycogen biosynthetic process"/>
    <property type="evidence" value="ECO:0007669"/>
    <property type="project" value="UniProtKB-UniRule"/>
</dbReference>
<dbReference type="CDD" id="cd03791">
    <property type="entry name" value="GT5_Glycogen_synthase_DULL1-like"/>
    <property type="match status" value="1"/>
</dbReference>
<dbReference type="Gene3D" id="3.40.50.2000">
    <property type="entry name" value="Glycogen Phosphorylase B"/>
    <property type="match status" value="2"/>
</dbReference>
<dbReference type="HAMAP" id="MF_00484">
    <property type="entry name" value="Glycogen_synth"/>
    <property type="match status" value="1"/>
</dbReference>
<dbReference type="InterPro" id="IPR001296">
    <property type="entry name" value="Glyco_trans_1"/>
</dbReference>
<dbReference type="InterPro" id="IPR011835">
    <property type="entry name" value="GS/SS"/>
</dbReference>
<dbReference type="InterPro" id="IPR013534">
    <property type="entry name" value="Starch_synth_cat_dom"/>
</dbReference>
<dbReference type="NCBIfam" id="TIGR02095">
    <property type="entry name" value="glgA"/>
    <property type="match status" value="1"/>
</dbReference>
<dbReference type="NCBIfam" id="NF001898">
    <property type="entry name" value="PRK00654.1-1"/>
    <property type="match status" value="1"/>
</dbReference>
<dbReference type="PANTHER" id="PTHR45825:SF11">
    <property type="entry name" value="ALPHA AMYLASE DOMAIN-CONTAINING PROTEIN"/>
    <property type="match status" value="1"/>
</dbReference>
<dbReference type="PANTHER" id="PTHR45825">
    <property type="entry name" value="GRANULE-BOUND STARCH SYNTHASE 1, CHLOROPLASTIC/AMYLOPLASTIC"/>
    <property type="match status" value="1"/>
</dbReference>
<dbReference type="Pfam" id="PF08323">
    <property type="entry name" value="Glyco_transf_5"/>
    <property type="match status" value="1"/>
</dbReference>
<dbReference type="Pfam" id="PF00534">
    <property type="entry name" value="Glycos_transf_1"/>
    <property type="match status" value="1"/>
</dbReference>
<dbReference type="SUPFAM" id="SSF53756">
    <property type="entry name" value="UDP-Glycosyltransferase/glycogen phosphorylase"/>
    <property type="match status" value="1"/>
</dbReference>
<evidence type="ECO:0000255" key="1">
    <source>
        <dbReference type="HAMAP-Rule" id="MF_00484"/>
    </source>
</evidence>
<evidence type="ECO:0000305" key="2"/>
<organism>
    <name type="scientific">Lactococcus lactis subsp. lactis (strain IL1403)</name>
    <name type="common">Streptococcus lactis</name>
    <dbReference type="NCBI Taxonomy" id="272623"/>
    <lineage>
        <taxon>Bacteria</taxon>
        <taxon>Bacillati</taxon>
        <taxon>Bacillota</taxon>
        <taxon>Bacilli</taxon>
        <taxon>Lactobacillales</taxon>
        <taxon>Streptococcaceae</taxon>
        <taxon>Lactococcus</taxon>
    </lineage>
</organism>
<name>GLGA_LACLA</name>
<proteinExistence type="inferred from homology"/>
<sequence>MKVLFASSECAPFFKTGGLGDVAGALPKELAKKSEIDSVAVILPYFKNEMKEEYRSLLKDEFYDFVDVGWRHEYVGVKSLEKEGVKYYFLDNEHYFGRGQLYGYGDDGERFAFFDLALCQLLEKLDFIPDVLHVNDWQTAMVPFLLKEKYNWIKAYEKIKTVLTIHNIEFQGLMHGDALSELFGMGMERYFEGVVRHNGMLNMLKTGILYADRVNTVSPTYAKEIQTSEFGCGLESILQYVDGKVSGILNGIDYDIYNPENDILIPYHFSEEELSGKGQMKAELQKRTGLPLNPNVPLIGMVSRLTNQKGFDLVLSQLEKVLEENVQIVLLGTGFPEIEEGFRYFSQKYPDKLSANIAFDIQFAQEIYAGSDFFLMPSAFEPCGLSQMIAMRYGTLPIVHEIGGLKDTVIPFNPISKEGTGFGFVDFEGQILVETINRALEVYGKEPEVLNKMVLSAMSKDFSWGTKAQQYIELYQEL</sequence>
<keyword id="KW-0320">Glycogen biosynthesis</keyword>
<keyword id="KW-0328">Glycosyltransferase</keyword>
<keyword id="KW-1185">Reference proteome</keyword>
<keyword id="KW-0808">Transferase</keyword>
<accession>Q9CHM9</accession>